<protein>
    <recommendedName>
        <fullName>Uncharacterized 55.8 kDa protein in cps region</fullName>
    </recommendedName>
    <alternativeName>
        <fullName>ORF3</fullName>
    </alternativeName>
</protein>
<proteinExistence type="predicted"/>
<organism>
    <name type="scientific">Klebsiella pneumoniae</name>
    <dbReference type="NCBI Taxonomy" id="573"/>
    <lineage>
        <taxon>Bacteria</taxon>
        <taxon>Pseudomonadati</taxon>
        <taxon>Pseudomonadota</taxon>
        <taxon>Gammaproteobacteria</taxon>
        <taxon>Enterobacterales</taxon>
        <taxon>Enterobacteriaceae</taxon>
        <taxon>Klebsiella/Raoultella group</taxon>
        <taxon>Klebsiella</taxon>
        <taxon>Klebsiella pneumoniae complex</taxon>
    </lineage>
</organism>
<feature type="chain" id="PRO_0000066157" description="Uncharacterized 55.8 kDa protein in cps region">
    <location>
        <begin position="1"/>
        <end position="504"/>
    </location>
</feature>
<accession>Q48449</accession>
<reference key="1">
    <citation type="journal article" date="1995" name="J. Bacteriol.">
        <title>Genomic organization of the Klebsiella pneumoniae cps region responsible for serotype K2 capsular polysaccharide synthesis in the virulent strain Chedid.</title>
        <authorList>
            <person name="Arakawa Y."/>
            <person name="Wacharotayankun R."/>
            <person name="Nagatsuka T."/>
            <person name="Ito H."/>
            <person name="Kato N."/>
            <person name="Ohta M."/>
        </authorList>
    </citation>
    <scope>NUCLEOTIDE SEQUENCE [GENOMIC DNA]</scope>
    <source>
        <strain>Chedid</strain>
    </source>
</reference>
<sequence length="504" mass="55782">MPRALSILVFPSFSLRYDSGAENGSCTMIKIARIAVTLGLLSSLGAQAYAAGLVVNDNDLRNDLAWLSDRGVIHLSLSTWPLSQEEISRALKKAKPSYSSEQVVLARINQRLSALKADFRVTGYTSTDKPGTPQGFGQTQPADNSLGLAFNNSGEWWDVHLQGNVEGGERISNGSRFNANGAYGAVKFWNQWLSFGQVPQWWGPGYEGSLIRGDAMRPMTGFLMQRAEQAAPETWWLRWVGPWQYQISASQMNQYTAVPHAKIIGGRFTFTPFQSLELGASRIMQWGGEGRPQSFSSFWDGFTGHDNTGTDNEPGNQLAGFDFKFKLEPTLGWPVSFYGQMVGEDESGYLPSANMFLGGIEGHHGWGKDAVNWYVEAHDTRTNMSRTNYSYTHHIYKDGYYQQGYPLGDAMGGDGQLFAGKVELITENNQRWSTRLAYAKVNPKDQSINKAFPHSDTLKGVQLGWSGDVYQSVRLNTSLWYTNANNSDSDDVGASAGIEIPFSL</sequence>
<name>YC03_KLEPN</name>
<dbReference type="EMBL" id="D21242">
    <property type="protein sequence ID" value="BAA04774.1"/>
    <property type="molecule type" value="Genomic_DNA"/>
</dbReference>
<dbReference type="SMR" id="Q48449"/>
<dbReference type="Gene3D" id="2.40.160.130">
    <property type="entry name" value="Capsule assembly protein Wzi"/>
    <property type="match status" value="1"/>
</dbReference>
<dbReference type="InterPro" id="IPR026950">
    <property type="entry name" value="Caps_assemb_Wzi"/>
</dbReference>
<dbReference type="InterPro" id="IPR038636">
    <property type="entry name" value="Wzi_sf"/>
</dbReference>
<dbReference type="Pfam" id="PF14052">
    <property type="entry name" value="Caps_assemb_Wzi"/>
    <property type="match status" value="1"/>
</dbReference>